<comment type="function">
    <text evidence="2">Part of the mycobacterial fatty acid elongation system FAS-II, which is involved in mycolic acid biosynthesis. Catalyzes the NADPH-dependent reduction of beta-ketoacyl derivatives, the second step of the FAS-II elongation cycle.</text>
</comment>
<comment type="catalytic activity">
    <reaction evidence="2">
        <text>a (3R)-hydroxyacyl-[ACP] + NADP(+) = a 3-oxoacyl-[ACP] + NADPH + H(+)</text>
        <dbReference type="Rhea" id="RHEA:17397"/>
        <dbReference type="Rhea" id="RHEA-COMP:9916"/>
        <dbReference type="Rhea" id="RHEA-COMP:9945"/>
        <dbReference type="ChEBI" id="CHEBI:15378"/>
        <dbReference type="ChEBI" id="CHEBI:57783"/>
        <dbReference type="ChEBI" id="CHEBI:58349"/>
        <dbReference type="ChEBI" id="CHEBI:78776"/>
        <dbReference type="ChEBI" id="CHEBI:78827"/>
        <dbReference type="EC" id="1.1.1.100"/>
    </reaction>
    <physiologicalReaction direction="right-to-left" evidence="2">
        <dbReference type="Rhea" id="RHEA:17399"/>
    </physiologicalReaction>
</comment>
<comment type="pathway">
    <text evidence="2">Lipid metabolism; mycolic acid biosynthesis.</text>
</comment>
<comment type="subunit">
    <text evidence="2">Homotetramer.</text>
</comment>
<comment type="subcellular location">
    <subcellularLocation>
        <location evidence="2">Secreted</location>
        <location evidence="2">Cell wall</location>
    </subcellularLocation>
</comment>
<comment type="similarity">
    <text evidence="4">Belongs to the short-chain dehydrogenases/reductases (SDR) family.</text>
</comment>
<accession>P0A5Y5</accession>
<accession>A0A1R3XYG4</accession>
<accession>P71764</accession>
<accession>Q48930</accession>
<accession>X2BHS3</accession>
<proteinExistence type="inferred from homology"/>
<sequence length="247" mass="25697">MTATATEGAKPPFVSRSVLVTGGNRGIGLAIAQRLAADGHKVAVTHRGSGAPKGLFGVECDVTDSDAVDRAFTAVEEHQGPVEVLVSNAGLSADAFLMRMTEEKFEKVINANLTGAFRVAQRASRSMQRNKFGRMIFIGSVSGSWGIGNQANYAASKAGVIGMARSIARELSKANVTANVVAPGYIDTDMTRALDERIQQGALQFIPAKRVGTPAEVAGVVSFLASEDASYISGAVIPVDGGMGMGH</sequence>
<reference key="1">
    <citation type="journal article" date="1995" name="Mol. Microbiol.">
        <title>Effect of inhA and katG on isoniazid resistance and virulence of Mycobacterium bovis.</title>
        <authorList>
            <person name="Wilson T.M."/>
            <person name="de Lisle G.W."/>
            <person name="Collins D.M."/>
        </authorList>
    </citation>
    <scope>NUCLEOTIDE SEQUENCE [GENOMIC DNA]</scope>
    <source>
        <strain>WAG201</strain>
    </source>
</reference>
<reference key="2">
    <citation type="journal article" date="2003" name="Proc. Natl. Acad. Sci. U.S.A.">
        <title>The complete genome sequence of Mycobacterium bovis.</title>
        <authorList>
            <person name="Garnier T."/>
            <person name="Eiglmeier K."/>
            <person name="Camus J.-C."/>
            <person name="Medina N."/>
            <person name="Mansoor H."/>
            <person name="Pryor M."/>
            <person name="Duthoy S."/>
            <person name="Grondin S."/>
            <person name="Lacroix C."/>
            <person name="Monsempe C."/>
            <person name="Simon S."/>
            <person name="Harris B."/>
            <person name="Atkin R."/>
            <person name="Doggett J."/>
            <person name="Mayes R."/>
            <person name="Keating L."/>
            <person name="Wheeler P.R."/>
            <person name="Parkhill J."/>
            <person name="Barrell B.G."/>
            <person name="Cole S.T."/>
            <person name="Gordon S.V."/>
            <person name="Hewinson R.G."/>
        </authorList>
    </citation>
    <scope>NUCLEOTIDE SEQUENCE [LARGE SCALE GENOMIC DNA]</scope>
    <source>
        <strain>ATCC BAA-935 / AF2122/97</strain>
    </source>
</reference>
<reference key="3">
    <citation type="journal article" date="2017" name="Genome Announc.">
        <title>Updated reference genome sequence and annotation of Mycobacterium bovis AF2122/97.</title>
        <authorList>
            <person name="Malone K.M."/>
            <person name="Farrell D."/>
            <person name="Stuber T.P."/>
            <person name="Schubert O.T."/>
            <person name="Aebersold R."/>
            <person name="Robbe-Austerman S."/>
            <person name="Gordon S.V."/>
        </authorList>
    </citation>
    <scope>NUCLEOTIDE SEQUENCE [LARGE SCALE GENOMIC DNA]</scope>
    <scope>GENOME REANNOTATION</scope>
    <source>
        <strain>ATCC BAA-935 / AF2122/97</strain>
    </source>
</reference>
<keyword id="KW-0134">Cell wall</keyword>
<keyword id="KW-0275">Fatty acid biosynthesis</keyword>
<keyword id="KW-0276">Fatty acid metabolism</keyword>
<keyword id="KW-0444">Lipid biosynthesis</keyword>
<keyword id="KW-0443">Lipid metabolism</keyword>
<keyword id="KW-0521">NADP</keyword>
<keyword id="KW-0560">Oxidoreductase</keyword>
<keyword id="KW-1185">Reference proteome</keyword>
<keyword id="KW-0964">Secreted</keyword>
<dbReference type="EC" id="1.1.1.100" evidence="2"/>
<dbReference type="EMBL" id="U41388">
    <property type="protein sequence ID" value="AAB60182.1"/>
    <property type="molecule type" value="Genomic_DNA"/>
</dbReference>
<dbReference type="EMBL" id="LT708304">
    <property type="protein sequence ID" value="SIU00122.1"/>
    <property type="molecule type" value="Genomic_DNA"/>
</dbReference>
<dbReference type="RefSeq" id="NP_855171.1">
    <property type="nucleotide sequence ID" value="NC_002945.3"/>
</dbReference>
<dbReference type="RefSeq" id="WP_003898892.1">
    <property type="nucleotide sequence ID" value="NC_002945.4"/>
</dbReference>
<dbReference type="SMR" id="P0A5Y5"/>
<dbReference type="GeneID" id="45425462"/>
<dbReference type="KEGG" id="mbo:BQ2027_MB1519"/>
<dbReference type="PATRIC" id="fig|233413.5.peg.1660"/>
<dbReference type="UniPathway" id="UPA00915"/>
<dbReference type="Proteomes" id="UP000001419">
    <property type="component" value="Chromosome"/>
</dbReference>
<dbReference type="GO" id="GO:0005576">
    <property type="term" value="C:extracellular region"/>
    <property type="evidence" value="ECO:0007669"/>
    <property type="project" value="UniProtKB-KW"/>
</dbReference>
<dbReference type="GO" id="GO:0004316">
    <property type="term" value="F:3-oxoacyl-[acyl-carrier-protein] reductase (NADPH) activity"/>
    <property type="evidence" value="ECO:0000250"/>
    <property type="project" value="UniProtKB"/>
</dbReference>
<dbReference type="GO" id="GO:0050661">
    <property type="term" value="F:NADP binding"/>
    <property type="evidence" value="ECO:0000250"/>
    <property type="project" value="UniProtKB"/>
</dbReference>
<dbReference type="GO" id="GO:0030497">
    <property type="term" value="P:fatty acid elongation"/>
    <property type="evidence" value="ECO:0000250"/>
    <property type="project" value="UniProtKB"/>
</dbReference>
<dbReference type="CDD" id="cd05333">
    <property type="entry name" value="BKR_SDR_c"/>
    <property type="match status" value="1"/>
</dbReference>
<dbReference type="FunFam" id="3.40.50.720:FF:000460">
    <property type="entry name" value="3-oxoacyl-[acyl-carrier-protein] reductase FabG1"/>
    <property type="match status" value="1"/>
</dbReference>
<dbReference type="Gene3D" id="3.40.50.720">
    <property type="entry name" value="NAD(P)-binding Rossmann-like Domain"/>
    <property type="match status" value="1"/>
</dbReference>
<dbReference type="InterPro" id="IPR053419">
    <property type="entry name" value="FAS-II_3-oxoacyl-ACP_reductase"/>
</dbReference>
<dbReference type="InterPro" id="IPR036291">
    <property type="entry name" value="NAD(P)-bd_dom_sf"/>
</dbReference>
<dbReference type="InterPro" id="IPR020904">
    <property type="entry name" value="Sc_DH/Rdtase_CS"/>
</dbReference>
<dbReference type="InterPro" id="IPR050259">
    <property type="entry name" value="SDR"/>
</dbReference>
<dbReference type="InterPro" id="IPR002347">
    <property type="entry name" value="SDR_fam"/>
</dbReference>
<dbReference type="NCBIfam" id="NF040605">
    <property type="entry name" value="mycolic_FabG1"/>
    <property type="match status" value="1"/>
</dbReference>
<dbReference type="NCBIfam" id="NF009466">
    <property type="entry name" value="PRK12826.1-2"/>
    <property type="match status" value="1"/>
</dbReference>
<dbReference type="PANTHER" id="PTHR42879">
    <property type="entry name" value="3-OXOACYL-(ACYL-CARRIER-PROTEIN) REDUCTASE"/>
    <property type="match status" value="1"/>
</dbReference>
<dbReference type="PANTHER" id="PTHR42879:SF2">
    <property type="entry name" value="3-OXOACYL-[ACYL-CARRIER-PROTEIN] REDUCTASE FABG"/>
    <property type="match status" value="1"/>
</dbReference>
<dbReference type="Pfam" id="PF13561">
    <property type="entry name" value="adh_short_C2"/>
    <property type="match status" value="1"/>
</dbReference>
<dbReference type="PRINTS" id="PR00081">
    <property type="entry name" value="GDHRDH"/>
</dbReference>
<dbReference type="PRINTS" id="PR00080">
    <property type="entry name" value="SDRFAMILY"/>
</dbReference>
<dbReference type="SMART" id="SM00822">
    <property type="entry name" value="PKS_KR"/>
    <property type="match status" value="1"/>
</dbReference>
<dbReference type="SUPFAM" id="SSF51735">
    <property type="entry name" value="NAD(P)-binding Rossmann-fold domains"/>
    <property type="match status" value="1"/>
</dbReference>
<dbReference type="PROSITE" id="PS00061">
    <property type="entry name" value="ADH_SHORT"/>
    <property type="match status" value="1"/>
</dbReference>
<protein>
    <recommendedName>
        <fullName evidence="2">3-oxoacyl-[acyl-carrier-protein] reductase MabA</fullName>
        <ecNumber evidence="2">1.1.1.100</ecNumber>
    </recommendedName>
    <alternativeName>
        <fullName evidence="2">3-ketoacyl-acyl carrier protein reductase</fullName>
    </alternativeName>
    <alternativeName>
        <fullName evidence="2">Beta-ketoacyl-ACP reductase</fullName>
    </alternativeName>
    <alternativeName>
        <fullName evidence="2">Beta-ketoacyl-acyl carrier protein reductase</fullName>
    </alternativeName>
</protein>
<name>MABA_MYCBO</name>
<evidence type="ECO:0000250" key="1">
    <source>
        <dbReference type="UniProtKB" id="P71534"/>
    </source>
</evidence>
<evidence type="ECO:0000250" key="2">
    <source>
        <dbReference type="UniProtKB" id="P9WGT3"/>
    </source>
</evidence>
<evidence type="ECO:0000255" key="3">
    <source>
        <dbReference type="PROSITE-ProRule" id="PRU10001"/>
    </source>
</evidence>
<evidence type="ECO:0000305" key="4"/>
<feature type="chain" id="PRO_0000054676" description="3-oxoacyl-[acyl-carrier-protein] reductase MabA">
    <location>
        <begin position="1"/>
        <end position="247"/>
    </location>
</feature>
<feature type="active site" description="Proton acceptor" evidence="3">
    <location>
        <position position="153"/>
    </location>
</feature>
<feature type="binding site" evidence="2">
    <location>
        <begin position="25"/>
        <end position="27"/>
    </location>
    <ligand>
        <name>NADP(+)</name>
        <dbReference type="ChEBI" id="CHEBI:58349"/>
    </ligand>
</feature>
<feature type="binding site" evidence="2">
    <location>
        <position position="47"/>
    </location>
    <ligand>
        <name>NADP(+)</name>
        <dbReference type="ChEBI" id="CHEBI:58349"/>
    </ligand>
</feature>
<feature type="binding site" evidence="2">
    <location>
        <begin position="61"/>
        <end position="62"/>
    </location>
    <ligand>
        <name>NADP(+)</name>
        <dbReference type="ChEBI" id="CHEBI:58349"/>
    </ligand>
</feature>
<feature type="binding site" evidence="2">
    <location>
        <position position="90"/>
    </location>
    <ligand>
        <name>NADP(+)</name>
        <dbReference type="ChEBI" id="CHEBI:58349"/>
    </ligand>
</feature>
<feature type="binding site" evidence="1">
    <location>
        <position position="153"/>
    </location>
    <ligand>
        <name>NADP(+)</name>
        <dbReference type="ChEBI" id="CHEBI:58349"/>
    </ligand>
</feature>
<feature type="binding site" evidence="1">
    <location>
        <position position="157"/>
    </location>
    <ligand>
        <name>NADP(+)</name>
        <dbReference type="ChEBI" id="CHEBI:58349"/>
    </ligand>
</feature>
<feature type="binding site" evidence="1">
    <location>
        <position position="186"/>
    </location>
    <ligand>
        <name>NADP(+)</name>
        <dbReference type="ChEBI" id="CHEBI:58349"/>
    </ligand>
</feature>
<feature type="binding site" evidence="1">
    <location>
        <position position="197"/>
    </location>
    <ligand>
        <name>NADP(+)</name>
        <dbReference type="ChEBI" id="CHEBI:58349"/>
    </ligand>
</feature>
<feature type="site" description="Important for activity" evidence="2">
    <location>
        <position position="140"/>
    </location>
</feature>
<organism>
    <name type="scientific">Mycobacterium bovis (strain ATCC BAA-935 / AF2122/97)</name>
    <dbReference type="NCBI Taxonomy" id="233413"/>
    <lineage>
        <taxon>Bacteria</taxon>
        <taxon>Bacillati</taxon>
        <taxon>Actinomycetota</taxon>
        <taxon>Actinomycetes</taxon>
        <taxon>Mycobacteriales</taxon>
        <taxon>Mycobacteriaceae</taxon>
        <taxon>Mycobacterium</taxon>
        <taxon>Mycobacterium tuberculosis complex</taxon>
    </lineage>
</organism>
<gene>
    <name evidence="2" type="primary">mabA</name>
    <name type="synonym">fabG</name>
    <name type="synonym">fabG1</name>
    <name type="ordered locus">BQ2027_MB1519</name>
</gene>